<comment type="function">
    <text>Probably plays a role in anchoring the complex to other cellular components.</text>
</comment>
<comment type="subunit">
    <text>EF-1 is composed of four subunits: alpha, beta, delta, and gamma.</text>
</comment>
<evidence type="ECO:0000255" key="1">
    <source>
        <dbReference type="PROSITE-ProRule" id="PRU00519"/>
    </source>
</evidence>
<evidence type="ECO:0000256" key="2">
    <source>
        <dbReference type="SAM" id="MobiDB-lite"/>
    </source>
</evidence>
<feature type="chain" id="PRO_0000208828" description="Elongation factor 1-gamma 1">
    <location>
        <begin position="1"/>
        <end position="418"/>
    </location>
</feature>
<feature type="domain" description="GST N-terminal">
    <location>
        <begin position="1"/>
        <end position="82"/>
    </location>
</feature>
<feature type="domain" description="GST C-terminal">
    <location>
        <begin position="87"/>
        <end position="213"/>
    </location>
</feature>
<feature type="domain" description="EF-1-gamma C-terminal" evidence="1">
    <location>
        <begin position="258"/>
        <end position="418"/>
    </location>
</feature>
<feature type="region of interest" description="Disordered" evidence="2">
    <location>
        <begin position="211"/>
        <end position="265"/>
    </location>
</feature>
<feature type="compositionally biased region" description="Basic and acidic residues" evidence="2">
    <location>
        <begin position="221"/>
        <end position="246"/>
    </location>
</feature>
<keyword id="KW-0251">Elongation factor</keyword>
<keyword id="KW-0648">Protein biosynthesis</keyword>
<keyword id="KW-1185">Reference proteome</keyword>
<reference key="1">
    <citation type="journal article" date="1998" name="FEBS Lett.">
        <title>Isolation and characterization of a rice cDNA encoding the gamma-subunit of translation elongation factor 1B (eEF1Bgamma).</title>
        <authorList>
            <person name="Kidou S."/>
            <person name="Tsukamoto S."/>
            <person name="Kobayashi S."/>
            <person name="Ejiri S."/>
        </authorList>
    </citation>
    <scope>NUCLEOTIDE SEQUENCE [MRNA]</scope>
</reference>
<reference key="2">
    <citation type="journal article" date="2005" name="Nature">
        <title>The map-based sequence of the rice genome.</title>
        <authorList>
            <consortium name="International rice genome sequencing project (IRGSP)"/>
        </authorList>
    </citation>
    <scope>NUCLEOTIDE SEQUENCE [LARGE SCALE GENOMIC DNA]</scope>
    <source>
        <strain>cv. Nipponbare</strain>
    </source>
</reference>
<reference key="3">
    <citation type="journal article" date="2008" name="Nucleic Acids Res.">
        <title>The rice annotation project database (RAP-DB): 2008 update.</title>
        <authorList>
            <consortium name="The rice annotation project (RAP)"/>
        </authorList>
    </citation>
    <scope>GENOME REANNOTATION</scope>
    <source>
        <strain>cv. Nipponbare</strain>
    </source>
</reference>
<reference key="4">
    <citation type="journal article" date="2013" name="Rice">
        <title>Improvement of the Oryza sativa Nipponbare reference genome using next generation sequence and optical map data.</title>
        <authorList>
            <person name="Kawahara Y."/>
            <person name="de la Bastide M."/>
            <person name="Hamilton J.P."/>
            <person name="Kanamori H."/>
            <person name="McCombie W.R."/>
            <person name="Ouyang S."/>
            <person name="Schwartz D.C."/>
            <person name="Tanaka T."/>
            <person name="Wu J."/>
            <person name="Zhou S."/>
            <person name="Childs K.L."/>
            <person name="Davidson R.M."/>
            <person name="Lin H."/>
            <person name="Quesada-Ocampo L."/>
            <person name="Vaillancourt B."/>
            <person name="Sakai H."/>
            <person name="Lee S.S."/>
            <person name="Kim J."/>
            <person name="Numa H."/>
            <person name="Itoh T."/>
            <person name="Buell C.R."/>
            <person name="Matsumoto T."/>
        </authorList>
    </citation>
    <scope>GENOME REANNOTATION</scope>
    <source>
        <strain>cv. Nipponbare</strain>
    </source>
</reference>
<dbReference type="EMBL" id="D89802">
    <property type="protein sequence ID" value="BAA34206.1"/>
    <property type="molecule type" value="mRNA"/>
</dbReference>
<dbReference type="EMBL" id="AP005797">
    <property type="protein sequence ID" value="BAD17615.1"/>
    <property type="molecule type" value="Genomic_DNA"/>
</dbReference>
<dbReference type="EMBL" id="AP008208">
    <property type="protein sequence ID" value="BAF08232.1"/>
    <property type="molecule type" value="Genomic_DNA"/>
</dbReference>
<dbReference type="EMBL" id="AP014958">
    <property type="protein sequence ID" value="BAS77699.1"/>
    <property type="molecule type" value="Genomic_DNA"/>
</dbReference>
<dbReference type="RefSeq" id="XP_015625389.1">
    <property type="nucleotide sequence ID" value="XM_015769903.1"/>
</dbReference>
<dbReference type="SMR" id="Q9ZRI7"/>
<dbReference type="FunCoup" id="Q9ZRI7">
    <property type="interactions" value="2711"/>
</dbReference>
<dbReference type="IntAct" id="Q9ZRI7">
    <property type="interactions" value="3"/>
</dbReference>
<dbReference type="STRING" id="39947.Q9ZRI7"/>
<dbReference type="PaxDb" id="39947-Q9ZRI7"/>
<dbReference type="EnsemblPlants" id="Os02t0220600-02">
    <property type="protein sequence ID" value="Os02t0220600-02"/>
    <property type="gene ID" value="Os02g0220600"/>
</dbReference>
<dbReference type="Gramene" id="Os02t0220600-02">
    <property type="protein sequence ID" value="Os02t0220600-02"/>
    <property type="gene ID" value="Os02g0220600"/>
</dbReference>
<dbReference type="KEGG" id="dosa:Os02g0220600"/>
<dbReference type="eggNOG" id="KOG0867">
    <property type="taxonomic scope" value="Eukaryota"/>
</dbReference>
<dbReference type="eggNOG" id="KOG1627">
    <property type="taxonomic scope" value="Eukaryota"/>
</dbReference>
<dbReference type="HOGENOM" id="CLU_011226_3_0_1"/>
<dbReference type="InParanoid" id="Q9ZRI7"/>
<dbReference type="OMA" id="TQYFSWT"/>
<dbReference type="OrthoDB" id="249703at2759"/>
<dbReference type="Proteomes" id="UP000000763">
    <property type="component" value="Chromosome 2"/>
</dbReference>
<dbReference type="Proteomes" id="UP000059680">
    <property type="component" value="Chromosome 2"/>
</dbReference>
<dbReference type="ExpressionAtlas" id="Q9ZRI7">
    <property type="expression patterns" value="baseline and differential"/>
</dbReference>
<dbReference type="GO" id="GO:0004364">
    <property type="term" value="F:glutathione transferase activity"/>
    <property type="evidence" value="ECO:0007669"/>
    <property type="project" value="InterPro"/>
</dbReference>
<dbReference type="GO" id="GO:0003746">
    <property type="term" value="F:translation elongation factor activity"/>
    <property type="evidence" value="ECO:0007669"/>
    <property type="project" value="UniProtKB-KW"/>
</dbReference>
<dbReference type="CDD" id="cd03181">
    <property type="entry name" value="GST_C_EF1Bgamma_like"/>
    <property type="match status" value="1"/>
</dbReference>
<dbReference type="CDD" id="cd03044">
    <property type="entry name" value="GST_N_EF1Bgamma"/>
    <property type="match status" value="1"/>
</dbReference>
<dbReference type="FunFam" id="1.20.1050.10:FF:000006">
    <property type="entry name" value="Elongation factor 1 gamma"/>
    <property type="match status" value="1"/>
</dbReference>
<dbReference type="FunFam" id="3.30.70.1010:FF:000001">
    <property type="entry name" value="Elongation factor 1-gamma 1"/>
    <property type="match status" value="1"/>
</dbReference>
<dbReference type="FunFam" id="3.40.30.10:FF:000148">
    <property type="entry name" value="Elongation factor 1B gamma"/>
    <property type="match status" value="1"/>
</dbReference>
<dbReference type="Gene3D" id="1.20.1050.10">
    <property type="match status" value="1"/>
</dbReference>
<dbReference type="Gene3D" id="3.40.30.10">
    <property type="entry name" value="Glutaredoxin"/>
    <property type="match status" value="1"/>
</dbReference>
<dbReference type="Gene3D" id="3.30.70.1010">
    <property type="entry name" value="Translation elongation factor EF1B, gamma chain, conserved domain"/>
    <property type="match status" value="1"/>
</dbReference>
<dbReference type="InterPro" id="IPR044628">
    <property type="entry name" value="EF-1-gamma_plant"/>
</dbReference>
<dbReference type="InterPro" id="IPR001662">
    <property type="entry name" value="EF1B_G_C"/>
</dbReference>
<dbReference type="InterPro" id="IPR036433">
    <property type="entry name" value="EF1B_G_C_sf"/>
</dbReference>
<dbReference type="InterPro" id="IPR010987">
    <property type="entry name" value="Glutathione-S-Trfase_C-like"/>
</dbReference>
<dbReference type="InterPro" id="IPR036282">
    <property type="entry name" value="Glutathione-S-Trfase_C_sf"/>
</dbReference>
<dbReference type="InterPro" id="IPR040079">
    <property type="entry name" value="Glutathione_S-Trfase"/>
</dbReference>
<dbReference type="InterPro" id="IPR004045">
    <property type="entry name" value="Glutathione_S-Trfase_N"/>
</dbReference>
<dbReference type="InterPro" id="IPR004046">
    <property type="entry name" value="GST_C"/>
</dbReference>
<dbReference type="InterPro" id="IPR036249">
    <property type="entry name" value="Thioredoxin-like_sf"/>
</dbReference>
<dbReference type="PANTHER" id="PTHR44372">
    <property type="entry name" value="ELONGATION FACTOR 1-GAMMA 1-RELATED"/>
    <property type="match status" value="1"/>
</dbReference>
<dbReference type="PANTHER" id="PTHR44372:SF1">
    <property type="entry name" value="ELONGATION FACTOR 1-GAMMA 3"/>
    <property type="match status" value="1"/>
</dbReference>
<dbReference type="Pfam" id="PF00647">
    <property type="entry name" value="EF1G"/>
    <property type="match status" value="1"/>
</dbReference>
<dbReference type="Pfam" id="PF00043">
    <property type="entry name" value="GST_C"/>
    <property type="match status" value="1"/>
</dbReference>
<dbReference type="Pfam" id="PF02798">
    <property type="entry name" value="GST_N"/>
    <property type="match status" value="1"/>
</dbReference>
<dbReference type="SFLD" id="SFLDS00019">
    <property type="entry name" value="Glutathione_Transferase_(cytos"/>
    <property type="match status" value="1"/>
</dbReference>
<dbReference type="SFLD" id="SFLDG00358">
    <property type="entry name" value="Main_(cytGST)"/>
    <property type="match status" value="1"/>
</dbReference>
<dbReference type="SMART" id="SM01183">
    <property type="entry name" value="EF1G"/>
    <property type="match status" value="1"/>
</dbReference>
<dbReference type="SUPFAM" id="SSF89942">
    <property type="entry name" value="eEF1-gamma domain"/>
    <property type="match status" value="1"/>
</dbReference>
<dbReference type="SUPFAM" id="SSF47616">
    <property type="entry name" value="GST C-terminal domain-like"/>
    <property type="match status" value="1"/>
</dbReference>
<dbReference type="SUPFAM" id="SSF52833">
    <property type="entry name" value="Thioredoxin-like"/>
    <property type="match status" value="1"/>
</dbReference>
<dbReference type="PROSITE" id="PS50040">
    <property type="entry name" value="EF1G_C"/>
    <property type="match status" value="1"/>
</dbReference>
<dbReference type="PROSITE" id="PS50405">
    <property type="entry name" value="GST_CTER"/>
    <property type="match status" value="1"/>
</dbReference>
<dbReference type="PROSITE" id="PS50404">
    <property type="entry name" value="GST_NTER"/>
    <property type="match status" value="1"/>
</dbReference>
<name>EF1G1_ORYSJ</name>
<accession>Q9ZRI7</accession>
<accession>Q0E2Q6</accession>
<accession>Q6YW45</accession>
<sequence>MALVLHTFDGNKNAFKALIAAEYSGVKVELAKNFQMGVSNKTPEYLKMNPIGKVPILETPDGPVFESNAIARYVTRSKSDNPLYGSSLIEYAHIEQWIDFSATEVDANTGKWLFPRLGFAPYVAVSEEAAIAALKRSLGALNTHLASNTYLVGHSVTLADIVMTCNLYMGFARIMTKNFTSEFPHVERYFWTMVNQPNFKKVMGDVKQADSVPQVQKKAAAPKEQKPKEAKKEAPKEAPKPKAAEKPEEEEEAPKPKPKNPLDLLPPSKMILDEWKRLYSNTKTNFREVAIKGFWDMYDPEGYSLWFCDYKYNDENTVSFVTMNKVGGFLQRMDLCRKYAFGKMLVIGSEPPFKVKGLWLFRGPEIPKFVMDEVYDMELYEWTKVDISDEAQKERVSAMIEDLEPFEGEALLDAKCFK</sequence>
<organism>
    <name type="scientific">Oryza sativa subsp. japonica</name>
    <name type="common">Rice</name>
    <dbReference type="NCBI Taxonomy" id="39947"/>
    <lineage>
        <taxon>Eukaryota</taxon>
        <taxon>Viridiplantae</taxon>
        <taxon>Streptophyta</taxon>
        <taxon>Embryophyta</taxon>
        <taxon>Tracheophyta</taxon>
        <taxon>Spermatophyta</taxon>
        <taxon>Magnoliopsida</taxon>
        <taxon>Liliopsida</taxon>
        <taxon>Poales</taxon>
        <taxon>Poaceae</taxon>
        <taxon>BOP clade</taxon>
        <taxon>Oryzoideae</taxon>
        <taxon>Oryzeae</taxon>
        <taxon>Oryzinae</taxon>
        <taxon>Oryza</taxon>
        <taxon>Oryza sativa</taxon>
    </lineage>
</organism>
<gene>
    <name type="ordered locus">Os02g0220600</name>
    <name type="ordered locus">LOC_Os02g12800</name>
    <name type="ORF">B1131G07.12</name>
</gene>
<proteinExistence type="evidence at transcript level"/>
<protein>
    <recommendedName>
        <fullName>Elongation factor 1-gamma 1</fullName>
        <shortName>EF-1-gamma 1</shortName>
    </recommendedName>
    <alternativeName>
        <fullName>eEF-1B gamma 1</fullName>
    </alternativeName>
</protein>